<dbReference type="EMBL" id="CP000362">
    <property type="protein sequence ID" value="ABG31060.1"/>
    <property type="molecule type" value="Genomic_DNA"/>
</dbReference>
<dbReference type="RefSeq" id="WP_011567680.1">
    <property type="nucleotide sequence ID" value="NC_008209.1"/>
</dbReference>
<dbReference type="SMR" id="Q16AD3"/>
<dbReference type="STRING" id="375451.RD1_1421"/>
<dbReference type="KEGG" id="rde:RD1_1421"/>
<dbReference type="eggNOG" id="COG0198">
    <property type="taxonomic scope" value="Bacteria"/>
</dbReference>
<dbReference type="HOGENOM" id="CLU_093315_2_2_5"/>
<dbReference type="OrthoDB" id="9807419at2"/>
<dbReference type="Proteomes" id="UP000007029">
    <property type="component" value="Chromosome"/>
</dbReference>
<dbReference type="GO" id="GO:1990904">
    <property type="term" value="C:ribonucleoprotein complex"/>
    <property type="evidence" value="ECO:0007669"/>
    <property type="project" value="UniProtKB-KW"/>
</dbReference>
<dbReference type="GO" id="GO:0005840">
    <property type="term" value="C:ribosome"/>
    <property type="evidence" value="ECO:0007669"/>
    <property type="project" value="UniProtKB-KW"/>
</dbReference>
<dbReference type="GO" id="GO:0019843">
    <property type="term" value="F:rRNA binding"/>
    <property type="evidence" value="ECO:0007669"/>
    <property type="project" value="UniProtKB-UniRule"/>
</dbReference>
<dbReference type="GO" id="GO:0003735">
    <property type="term" value="F:structural constituent of ribosome"/>
    <property type="evidence" value="ECO:0007669"/>
    <property type="project" value="InterPro"/>
</dbReference>
<dbReference type="GO" id="GO:0006412">
    <property type="term" value="P:translation"/>
    <property type="evidence" value="ECO:0007669"/>
    <property type="project" value="UniProtKB-UniRule"/>
</dbReference>
<dbReference type="CDD" id="cd06089">
    <property type="entry name" value="KOW_RPL26"/>
    <property type="match status" value="1"/>
</dbReference>
<dbReference type="Gene3D" id="2.30.30.30">
    <property type="match status" value="1"/>
</dbReference>
<dbReference type="HAMAP" id="MF_01326_B">
    <property type="entry name" value="Ribosomal_uL24_B"/>
    <property type="match status" value="1"/>
</dbReference>
<dbReference type="InterPro" id="IPR005824">
    <property type="entry name" value="KOW"/>
</dbReference>
<dbReference type="InterPro" id="IPR014722">
    <property type="entry name" value="Rib_uL2_dom2"/>
</dbReference>
<dbReference type="InterPro" id="IPR003256">
    <property type="entry name" value="Ribosomal_uL24"/>
</dbReference>
<dbReference type="InterPro" id="IPR005825">
    <property type="entry name" value="Ribosomal_uL24_CS"/>
</dbReference>
<dbReference type="InterPro" id="IPR041988">
    <property type="entry name" value="Ribosomal_uL24_KOW"/>
</dbReference>
<dbReference type="InterPro" id="IPR008991">
    <property type="entry name" value="Translation_prot_SH3-like_sf"/>
</dbReference>
<dbReference type="NCBIfam" id="TIGR01079">
    <property type="entry name" value="rplX_bact"/>
    <property type="match status" value="1"/>
</dbReference>
<dbReference type="PANTHER" id="PTHR12903">
    <property type="entry name" value="MITOCHONDRIAL RIBOSOMAL PROTEIN L24"/>
    <property type="match status" value="1"/>
</dbReference>
<dbReference type="Pfam" id="PF00467">
    <property type="entry name" value="KOW"/>
    <property type="match status" value="1"/>
</dbReference>
<dbReference type="Pfam" id="PF17136">
    <property type="entry name" value="ribosomal_L24"/>
    <property type="match status" value="1"/>
</dbReference>
<dbReference type="SMART" id="SM00739">
    <property type="entry name" value="KOW"/>
    <property type="match status" value="1"/>
</dbReference>
<dbReference type="SUPFAM" id="SSF50104">
    <property type="entry name" value="Translation proteins SH3-like domain"/>
    <property type="match status" value="1"/>
</dbReference>
<dbReference type="PROSITE" id="PS01108">
    <property type="entry name" value="RIBOSOMAL_L24"/>
    <property type="match status" value="1"/>
</dbReference>
<proteinExistence type="inferred from homology"/>
<feature type="chain" id="PRO_1000052298" description="Large ribosomal subunit protein uL24">
    <location>
        <begin position="1"/>
        <end position="103"/>
    </location>
</feature>
<gene>
    <name evidence="1" type="primary">rplX</name>
    <name type="ordered locus">RD1_1421</name>
</gene>
<sequence>MAAKLKKGDKVIVLAGKDKGKTGSISSVDPKSGKAIVDGINIAIRATRQSQTEQGGRIPKAMPIDLSNLAYVDANGKATRVGFKMEGDKKVRFAKTTGDVIDA</sequence>
<name>RL24_ROSDO</name>
<accession>Q16AD3</accession>
<evidence type="ECO:0000255" key="1">
    <source>
        <dbReference type="HAMAP-Rule" id="MF_01326"/>
    </source>
</evidence>
<evidence type="ECO:0000305" key="2"/>
<comment type="function">
    <text evidence="1">One of two assembly initiator proteins, it binds directly to the 5'-end of the 23S rRNA, where it nucleates assembly of the 50S subunit.</text>
</comment>
<comment type="function">
    <text evidence="1">One of the proteins that surrounds the polypeptide exit tunnel on the outside of the subunit.</text>
</comment>
<comment type="subunit">
    <text evidence="1">Part of the 50S ribosomal subunit.</text>
</comment>
<comment type="similarity">
    <text evidence="1">Belongs to the universal ribosomal protein uL24 family.</text>
</comment>
<reference key="1">
    <citation type="journal article" date="2007" name="J. Bacteriol.">
        <title>The complete genome sequence of Roseobacter denitrificans reveals a mixotrophic rather than photosynthetic metabolism.</title>
        <authorList>
            <person name="Swingley W.D."/>
            <person name="Sadekar S."/>
            <person name="Mastrian S.D."/>
            <person name="Matthies H.J."/>
            <person name="Hao J."/>
            <person name="Ramos H."/>
            <person name="Acharya C.R."/>
            <person name="Conrad A.L."/>
            <person name="Taylor H.L."/>
            <person name="Dejesa L.C."/>
            <person name="Shah M.K."/>
            <person name="O'Huallachain M.E."/>
            <person name="Lince M.T."/>
            <person name="Blankenship R.E."/>
            <person name="Beatty J.T."/>
            <person name="Touchman J.W."/>
        </authorList>
    </citation>
    <scope>NUCLEOTIDE SEQUENCE [LARGE SCALE GENOMIC DNA]</scope>
    <source>
        <strain>ATCC 33942 / OCh 114</strain>
    </source>
</reference>
<protein>
    <recommendedName>
        <fullName evidence="1">Large ribosomal subunit protein uL24</fullName>
    </recommendedName>
    <alternativeName>
        <fullName evidence="2">50S ribosomal protein L24</fullName>
    </alternativeName>
</protein>
<organism>
    <name type="scientific">Roseobacter denitrificans (strain ATCC 33942 / OCh 114)</name>
    <name type="common">Erythrobacter sp. (strain OCh 114)</name>
    <name type="synonym">Roseobacter denitrificans</name>
    <dbReference type="NCBI Taxonomy" id="375451"/>
    <lineage>
        <taxon>Bacteria</taxon>
        <taxon>Pseudomonadati</taxon>
        <taxon>Pseudomonadota</taxon>
        <taxon>Alphaproteobacteria</taxon>
        <taxon>Rhodobacterales</taxon>
        <taxon>Roseobacteraceae</taxon>
        <taxon>Roseobacter</taxon>
    </lineage>
</organism>
<keyword id="KW-1185">Reference proteome</keyword>
<keyword id="KW-0687">Ribonucleoprotein</keyword>
<keyword id="KW-0689">Ribosomal protein</keyword>
<keyword id="KW-0694">RNA-binding</keyword>
<keyword id="KW-0699">rRNA-binding</keyword>